<feature type="chain" id="PRO_0000093482" description="Cytotoxin SP15a" evidence="3">
    <location>
        <begin position="1"/>
        <end position="60"/>
    </location>
</feature>
<feature type="disulfide bond" evidence="1">
    <location>
        <begin position="3"/>
        <end position="21"/>
    </location>
</feature>
<feature type="disulfide bond" evidence="1">
    <location>
        <begin position="14"/>
        <end position="38"/>
    </location>
</feature>
<feature type="disulfide bond" evidence="1">
    <location>
        <begin position="42"/>
        <end position="53"/>
    </location>
</feature>
<feature type="disulfide bond" evidence="1">
    <location>
        <begin position="54"/>
        <end position="59"/>
    </location>
</feature>
<keyword id="KW-0123">Cardiotoxin</keyword>
<keyword id="KW-0204">Cytolysis</keyword>
<keyword id="KW-0903">Direct protein sequencing</keyword>
<keyword id="KW-1015">Disulfide bond</keyword>
<keyword id="KW-0472">Membrane</keyword>
<keyword id="KW-0964">Secreted</keyword>
<keyword id="KW-1052">Target cell membrane</keyword>
<keyword id="KW-1053">Target membrane</keyword>
<keyword id="KW-0800">Toxin</keyword>
<evidence type="ECO:0000250" key="1">
    <source>
        <dbReference type="UniProtKB" id="P60301"/>
    </source>
</evidence>
<evidence type="ECO:0000250" key="2">
    <source>
        <dbReference type="UniProtKB" id="P60304"/>
    </source>
</evidence>
<evidence type="ECO:0000269" key="3">
    <source>
    </source>
</evidence>
<evidence type="ECO:0000305" key="4"/>
<accession>P60307</accession>
<protein>
    <recommendedName>
        <fullName>Cytotoxin SP15a</fullName>
    </recommendedName>
</protein>
<sequence length="60" mass="6683">LKCKKLVPLFSKTCPPGKNLCYKMFMVATPKVPVKRGCIDVCPKSSLLVKYVCCNTDKCN</sequence>
<reference key="1">
    <citation type="journal article" date="2000" name="Toxicon">
        <title>The multiplicity of cardiotoxins from Naja naja atra (Taiwan cobra) venom.</title>
        <authorList>
            <person name="Chang L.-S."/>
            <person name="Huang H.-B."/>
            <person name="Lin S.-R."/>
        </authorList>
    </citation>
    <scope>PROTEIN SEQUENCE</scope>
    <scope>SUBCELLULAR LOCATION</scope>
    <source>
        <tissue>Venom</tissue>
    </source>
</reference>
<comment type="function">
    <text evidence="1 2">Shows cytolytic activity on many different cells by forming pore in lipid membranes. In vivo, increases heart rate or kills the animal by cardiac arrest. In addition, it binds to heparin with high affinity, interacts with Kv channel-interacting protein 1 (KCNIP1) in a calcium-independent manner, and binds to integrin alpha-V/beta-3 (ITGAV/ITGB3) with moderate affinity.</text>
</comment>
<comment type="subunit">
    <text evidence="1">Monomer in solution; Homodimer and oligomer in the presence of negatively charged lipids forming a pore with a size ranging between 20 and 30 Angstroms.</text>
</comment>
<comment type="subcellular location">
    <subcellularLocation>
        <location evidence="3">Secreted</location>
    </subcellularLocation>
    <subcellularLocation>
        <location evidence="1">Target cell membrane</location>
    </subcellularLocation>
</comment>
<comment type="tissue specificity">
    <text evidence="4">Expressed by the venom gland.</text>
</comment>
<comment type="miscellaneous">
    <text evidence="4">Is classified as a P-type cytotoxin, since a proline residue stands at position 30 (Pro-31 in standard classification).</text>
</comment>
<comment type="similarity">
    <text evidence="4">Belongs to the three-finger toxin family. Short-chain subfamily. Type IA cytotoxin sub-subfamily.</text>
</comment>
<dbReference type="SMR" id="P60307"/>
<dbReference type="GO" id="GO:0005576">
    <property type="term" value="C:extracellular region"/>
    <property type="evidence" value="ECO:0007669"/>
    <property type="project" value="UniProtKB-SubCell"/>
</dbReference>
<dbReference type="GO" id="GO:0016020">
    <property type="term" value="C:membrane"/>
    <property type="evidence" value="ECO:0007669"/>
    <property type="project" value="UniProtKB-KW"/>
</dbReference>
<dbReference type="GO" id="GO:0044218">
    <property type="term" value="C:other organism cell membrane"/>
    <property type="evidence" value="ECO:0007669"/>
    <property type="project" value="UniProtKB-KW"/>
</dbReference>
<dbReference type="GO" id="GO:0090729">
    <property type="term" value="F:toxin activity"/>
    <property type="evidence" value="ECO:0007669"/>
    <property type="project" value="UniProtKB-KW"/>
</dbReference>
<dbReference type="GO" id="GO:0031640">
    <property type="term" value="P:killing of cells of another organism"/>
    <property type="evidence" value="ECO:0007669"/>
    <property type="project" value="UniProtKB-KW"/>
</dbReference>
<dbReference type="CDD" id="cd00206">
    <property type="entry name" value="TFP_snake_toxin"/>
    <property type="match status" value="1"/>
</dbReference>
<dbReference type="FunFam" id="2.10.60.10:FF:000024">
    <property type="entry name" value="Cytotoxin 1"/>
    <property type="match status" value="1"/>
</dbReference>
<dbReference type="Gene3D" id="2.10.60.10">
    <property type="entry name" value="CD59"/>
    <property type="match status" value="1"/>
</dbReference>
<dbReference type="InterPro" id="IPR003572">
    <property type="entry name" value="Cytotoxin_Cobra"/>
</dbReference>
<dbReference type="InterPro" id="IPR003571">
    <property type="entry name" value="Snake_3FTx"/>
</dbReference>
<dbReference type="InterPro" id="IPR045860">
    <property type="entry name" value="Snake_toxin-like_sf"/>
</dbReference>
<dbReference type="InterPro" id="IPR018354">
    <property type="entry name" value="Snake_toxin_con_site"/>
</dbReference>
<dbReference type="InterPro" id="IPR054131">
    <property type="entry name" value="Toxin_cobra-type"/>
</dbReference>
<dbReference type="Pfam" id="PF21947">
    <property type="entry name" value="Toxin_cobra-type"/>
    <property type="match status" value="1"/>
</dbReference>
<dbReference type="PRINTS" id="PR00282">
    <property type="entry name" value="CYTOTOXIN"/>
</dbReference>
<dbReference type="SUPFAM" id="SSF57302">
    <property type="entry name" value="Snake toxin-like"/>
    <property type="match status" value="1"/>
</dbReference>
<dbReference type="PROSITE" id="PS00272">
    <property type="entry name" value="SNAKE_TOXIN"/>
    <property type="match status" value="1"/>
</dbReference>
<proteinExistence type="evidence at protein level"/>
<organism>
    <name type="scientific">Naja atra</name>
    <name type="common">Chinese cobra</name>
    <dbReference type="NCBI Taxonomy" id="8656"/>
    <lineage>
        <taxon>Eukaryota</taxon>
        <taxon>Metazoa</taxon>
        <taxon>Chordata</taxon>
        <taxon>Craniata</taxon>
        <taxon>Vertebrata</taxon>
        <taxon>Euteleostomi</taxon>
        <taxon>Lepidosauria</taxon>
        <taxon>Squamata</taxon>
        <taxon>Bifurcata</taxon>
        <taxon>Unidentata</taxon>
        <taxon>Episquamata</taxon>
        <taxon>Toxicofera</taxon>
        <taxon>Serpentes</taxon>
        <taxon>Colubroidea</taxon>
        <taxon>Elapidae</taxon>
        <taxon>Elapinae</taxon>
        <taxon>Naja</taxon>
    </lineage>
</organism>
<name>3SAFA_NAJAT</name>